<reference key="1">
    <citation type="journal article" date="1997" name="Nature">
        <title>The complete genome sequence of the Gram-positive bacterium Bacillus subtilis.</title>
        <authorList>
            <person name="Kunst F."/>
            <person name="Ogasawara N."/>
            <person name="Moszer I."/>
            <person name="Albertini A.M."/>
            <person name="Alloni G."/>
            <person name="Azevedo V."/>
            <person name="Bertero M.G."/>
            <person name="Bessieres P."/>
            <person name="Bolotin A."/>
            <person name="Borchert S."/>
            <person name="Borriss R."/>
            <person name="Boursier L."/>
            <person name="Brans A."/>
            <person name="Braun M."/>
            <person name="Brignell S.C."/>
            <person name="Bron S."/>
            <person name="Brouillet S."/>
            <person name="Bruschi C.V."/>
            <person name="Caldwell B."/>
            <person name="Capuano V."/>
            <person name="Carter N.M."/>
            <person name="Choi S.-K."/>
            <person name="Codani J.-J."/>
            <person name="Connerton I.F."/>
            <person name="Cummings N.J."/>
            <person name="Daniel R.A."/>
            <person name="Denizot F."/>
            <person name="Devine K.M."/>
            <person name="Duesterhoeft A."/>
            <person name="Ehrlich S.D."/>
            <person name="Emmerson P.T."/>
            <person name="Entian K.-D."/>
            <person name="Errington J."/>
            <person name="Fabret C."/>
            <person name="Ferrari E."/>
            <person name="Foulger D."/>
            <person name="Fritz C."/>
            <person name="Fujita M."/>
            <person name="Fujita Y."/>
            <person name="Fuma S."/>
            <person name="Galizzi A."/>
            <person name="Galleron N."/>
            <person name="Ghim S.-Y."/>
            <person name="Glaser P."/>
            <person name="Goffeau A."/>
            <person name="Golightly E.J."/>
            <person name="Grandi G."/>
            <person name="Guiseppi G."/>
            <person name="Guy B.J."/>
            <person name="Haga K."/>
            <person name="Haiech J."/>
            <person name="Harwood C.R."/>
            <person name="Henaut A."/>
            <person name="Hilbert H."/>
            <person name="Holsappel S."/>
            <person name="Hosono S."/>
            <person name="Hullo M.-F."/>
            <person name="Itaya M."/>
            <person name="Jones L.-M."/>
            <person name="Joris B."/>
            <person name="Karamata D."/>
            <person name="Kasahara Y."/>
            <person name="Klaerr-Blanchard M."/>
            <person name="Klein C."/>
            <person name="Kobayashi Y."/>
            <person name="Koetter P."/>
            <person name="Koningstein G."/>
            <person name="Krogh S."/>
            <person name="Kumano M."/>
            <person name="Kurita K."/>
            <person name="Lapidus A."/>
            <person name="Lardinois S."/>
            <person name="Lauber J."/>
            <person name="Lazarevic V."/>
            <person name="Lee S.-M."/>
            <person name="Levine A."/>
            <person name="Liu H."/>
            <person name="Masuda S."/>
            <person name="Mauel C."/>
            <person name="Medigue C."/>
            <person name="Medina N."/>
            <person name="Mellado R.P."/>
            <person name="Mizuno M."/>
            <person name="Moestl D."/>
            <person name="Nakai S."/>
            <person name="Noback M."/>
            <person name="Noone D."/>
            <person name="O'Reilly M."/>
            <person name="Ogawa K."/>
            <person name="Ogiwara A."/>
            <person name="Oudega B."/>
            <person name="Park S.-H."/>
            <person name="Parro V."/>
            <person name="Pohl T.M."/>
            <person name="Portetelle D."/>
            <person name="Porwollik S."/>
            <person name="Prescott A.M."/>
            <person name="Presecan E."/>
            <person name="Pujic P."/>
            <person name="Purnelle B."/>
            <person name="Rapoport G."/>
            <person name="Rey M."/>
            <person name="Reynolds S."/>
            <person name="Rieger M."/>
            <person name="Rivolta C."/>
            <person name="Rocha E."/>
            <person name="Roche B."/>
            <person name="Rose M."/>
            <person name="Sadaie Y."/>
            <person name="Sato T."/>
            <person name="Scanlan E."/>
            <person name="Schleich S."/>
            <person name="Schroeter R."/>
            <person name="Scoffone F."/>
            <person name="Sekiguchi J."/>
            <person name="Sekowska A."/>
            <person name="Seror S.J."/>
            <person name="Serror P."/>
            <person name="Shin B.-S."/>
            <person name="Soldo B."/>
            <person name="Sorokin A."/>
            <person name="Tacconi E."/>
            <person name="Takagi T."/>
            <person name="Takahashi H."/>
            <person name="Takemaru K."/>
            <person name="Takeuchi M."/>
            <person name="Tamakoshi A."/>
            <person name="Tanaka T."/>
            <person name="Terpstra P."/>
            <person name="Tognoni A."/>
            <person name="Tosato V."/>
            <person name="Uchiyama S."/>
            <person name="Vandenbol M."/>
            <person name="Vannier F."/>
            <person name="Vassarotti A."/>
            <person name="Viari A."/>
            <person name="Wambutt R."/>
            <person name="Wedler E."/>
            <person name="Wedler H."/>
            <person name="Weitzenegger T."/>
            <person name="Winters P."/>
            <person name="Wipat A."/>
            <person name="Yamamoto H."/>
            <person name="Yamane K."/>
            <person name="Yasumoto K."/>
            <person name="Yata K."/>
            <person name="Yoshida K."/>
            <person name="Yoshikawa H.-F."/>
            <person name="Zumstein E."/>
            <person name="Yoshikawa H."/>
            <person name="Danchin A."/>
        </authorList>
    </citation>
    <scope>NUCLEOTIDE SEQUENCE [LARGE SCALE GENOMIC DNA]</scope>
    <source>
        <strain>168</strain>
    </source>
</reference>
<reference key="2">
    <citation type="journal article" date="2001" name="J. Bacteriol.">
        <title>Functional analysis of 14 genes that constitute the purine catabolic pathway in Bacillus subtilis and evidence for a novel regulon controlled by the PucR transcription activator.</title>
        <authorList>
            <person name="Schultz A.C."/>
            <person name="Nygaard P."/>
            <person name="Saxild H.H."/>
        </authorList>
    </citation>
    <scope>FUNCTION</scope>
    <source>
        <strain>168</strain>
    </source>
</reference>
<dbReference type="EC" id="1.17.1.4"/>
<dbReference type="EMBL" id="AL009126">
    <property type="protein sequence ID" value="CAB15241.1"/>
    <property type="molecule type" value="Genomic_DNA"/>
</dbReference>
<dbReference type="PIR" id="E70017">
    <property type="entry name" value="E70017"/>
</dbReference>
<dbReference type="RefSeq" id="NP_391131.1">
    <property type="nucleotide sequence ID" value="NC_000964.3"/>
</dbReference>
<dbReference type="RefSeq" id="WP_003243519.1">
    <property type="nucleotide sequence ID" value="NZ_OZ025638.1"/>
</dbReference>
<dbReference type="SMR" id="O32147"/>
<dbReference type="FunCoup" id="O32147">
    <property type="interactions" value="192"/>
</dbReference>
<dbReference type="STRING" id="224308.BSU32510"/>
<dbReference type="PaxDb" id="224308-BSU32510"/>
<dbReference type="EnsemblBacteria" id="CAB15241">
    <property type="protein sequence ID" value="CAB15241"/>
    <property type="gene ID" value="BSU_32510"/>
</dbReference>
<dbReference type="GeneID" id="938865"/>
<dbReference type="KEGG" id="bsu:BSU32510"/>
<dbReference type="PATRIC" id="fig|224308.179.peg.3520"/>
<dbReference type="eggNOG" id="COG1975">
    <property type="taxonomic scope" value="Bacteria"/>
</dbReference>
<dbReference type="InParanoid" id="O32147"/>
<dbReference type="OrthoDB" id="9773039at2"/>
<dbReference type="PhylomeDB" id="O32147"/>
<dbReference type="BioCyc" id="BSUB:BSU32510-MONOMER"/>
<dbReference type="UniPathway" id="UPA00604">
    <property type="reaction ID" value="UER00661"/>
</dbReference>
<dbReference type="UniPathway" id="UPA00604">
    <property type="reaction ID" value="UER00662"/>
</dbReference>
<dbReference type="Proteomes" id="UP000001570">
    <property type="component" value="Chromosome"/>
</dbReference>
<dbReference type="GO" id="GO:0004854">
    <property type="term" value="F:xanthine dehydrogenase activity"/>
    <property type="evidence" value="ECO:0007669"/>
    <property type="project" value="UniProtKB-EC"/>
</dbReference>
<dbReference type="GO" id="GO:0009114">
    <property type="term" value="P:hypoxanthine catabolic process"/>
    <property type="evidence" value="ECO:0007669"/>
    <property type="project" value="UniProtKB-UniPathway"/>
</dbReference>
<dbReference type="Gene3D" id="3.40.50.720">
    <property type="entry name" value="NAD(P)-binding Rossmann-like Domain"/>
    <property type="match status" value="1"/>
</dbReference>
<dbReference type="InterPro" id="IPR052698">
    <property type="entry name" value="MoCofactor_Util/Proc"/>
</dbReference>
<dbReference type="InterPro" id="IPR003777">
    <property type="entry name" value="XdhC_CoxI"/>
</dbReference>
<dbReference type="InterPro" id="IPR027051">
    <property type="entry name" value="XdhC_Rossmann_dom"/>
</dbReference>
<dbReference type="PANTHER" id="PTHR30388">
    <property type="entry name" value="ALDEHYDE OXIDOREDUCTASE MOLYBDENUM COFACTOR ASSEMBLY PROTEIN"/>
    <property type="match status" value="1"/>
</dbReference>
<dbReference type="PANTHER" id="PTHR30388:SF6">
    <property type="entry name" value="XANTHINE DEHYDROGENASE SUBUNIT A-RELATED"/>
    <property type="match status" value="1"/>
</dbReference>
<dbReference type="Pfam" id="PF13478">
    <property type="entry name" value="XdhC_C"/>
    <property type="match status" value="1"/>
</dbReference>
<dbReference type="Pfam" id="PF02625">
    <property type="entry name" value="XdhC_CoxI"/>
    <property type="match status" value="1"/>
</dbReference>
<keyword id="KW-0520">NAD</keyword>
<keyword id="KW-0560">Oxidoreductase</keyword>
<keyword id="KW-0659">Purine metabolism</keyword>
<keyword id="KW-1185">Reference proteome</keyword>
<name>XDHA_BACSU</name>
<comment type="function">
    <text evidence="1">Oxidizes hypoxanthine and xanthine to uric acid. PucA subunit could exert a molybdenum cofactor recruiting function.</text>
</comment>
<comment type="catalytic activity">
    <reaction>
        <text>xanthine + NAD(+) + H2O = urate + NADH + H(+)</text>
        <dbReference type="Rhea" id="RHEA:16669"/>
        <dbReference type="ChEBI" id="CHEBI:15377"/>
        <dbReference type="ChEBI" id="CHEBI:15378"/>
        <dbReference type="ChEBI" id="CHEBI:17712"/>
        <dbReference type="ChEBI" id="CHEBI:17775"/>
        <dbReference type="ChEBI" id="CHEBI:57540"/>
        <dbReference type="ChEBI" id="CHEBI:57945"/>
        <dbReference type="EC" id="1.17.1.4"/>
    </reaction>
</comment>
<comment type="catalytic activity">
    <reaction>
        <text>hypoxanthine + NAD(+) + H2O = xanthine + NADH + H(+)</text>
        <dbReference type="Rhea" id="RHEA:24670"/>
        <dbReference type="ChEBI" id="CHEBI:15377"/>
        <dbReference type="ChEBI" id="CHEBI:15378"/>
        <dbReference type="ChEBI" id="CHEBI:17368"/>
        <dbReference type="ChEBI" id="CHEBI:17712"/>
        <dbReference type="ChEBI" id="CHEBI:57540"/>
        <dbReference type="ChEBI" id="CHEBI:57945"/>
        <dbReference type="EC" id="1.17.1.4"/>
    </reaction>
</comment>
<comment type="pathway">
    <text>Purine metabolism; hypoxanthine degradation; urate from hypoxanthine: step 1/2.</text>
</comment>
<comment type="pathway">
    <text>Purine metabolism; hypoxanthine degradation; urate from hypoxanthine: step 2/2.</text>
</comment>
<comment type="subunit">
    <text>Could be composed of four subunits: PucA, PucC, PucD and PucE.</text>
</comment>
<comment type="induction">
    <text>Expression is very low in excess nitrogen (glutamate plus ammonia) and is induced during limiting-nitrogen conditions (glutamate). Expression decreases when allantoin is added during limiting-nitrogen conditions.</text>
</comment>
<accession>O32147</accession>
<evidence type="ECO:0000269" key="1">
    <source>
    </source>
</evidence>
<gene>
    <name type="primary">pucA</name>
    <name type="synonym">yurF</name>
    <name type="ordered locus">BSU32510</name>
</gene>
<protein>
    <recommendedName>
        <fullName>Probable xanthine dehydrogenase subunit A</fullName>
        <shortName>XDHase subunit A</shortName>
        <ecNumber>1.17.1.4</ecNumber>
    </recommendedName>
</protein>
<proteinExistence type="evidence at transcript level"/>
<organism>
    <name type="scientific">Bacillus subtilis (strain 168)</name>
    <dbReference type="NCBI Taxonomy" id="224308"/>
    <lineage>
        <taxon>Bacteria</taxon>
        <taxon>Bacillati</taxon>
        <taxon>Bacillota</taxon>
        <taxon>Bacilli</taxon>
        <taxon>Bacillales</taxon>
        <taxon>Bacillaceae</taxon>
        <taxon>Bacillus</taxon>
    </lineage>
</organism>
<sequence>MGNFHTMLDALLEDQEEAVLATIVQVEGSAYRKAGASMLFKKKGRRIGLLSGGCVEEDVFQRISALGDQLTSTLIPYDMRSEDDLSWGMGAGCNGIIHVHAERITQEKRRHYEKVRDCLHSGKAVTSVIKIESSHYLFLTENGHFGNWPDAPLQDIQRTVSTLHLPHFDQTTNMFIQRIEPKPRLILFGAGPDNVPLANLAADTGFSVIVTDWRPAYCTSSLFPKADQLITAFPEQMLSEFQFFPHDAAVVATHHYQHDQTIINFLFSQNLHYIGLLGSANRTKRLLSGKHPPSHFYSPVGLKIGAEGPEEIAVSVVAEIIQTRKRVAVV</sequence>
<feature type="chain" id="PRO_0000166100" description="Probable xanthine dehydrogenase subunit A">
    <location>
        <begin position="1"/>
        <end position="330"/>
    </location>
</feature>